<feature type="chain" id="PRO_1000051109" description="Small ribosomal subunit protein uS19">
    <location>
        <begin position="1"/>
        <end position="91"/>
    </location>
</feature>
<accession>Q0K623</accession>
<organism>
    <name type="scientific">Cupriavidus necator (strain ATCC 17699 / DSM 428 / KCTC 22496 / NCIMB 10442 / H16 / Stanier 337)</name>
    <name type="common">Ralstonia eutropha</name>
    <dbReference type="NCBI Taxonomy" id="381666"/>
    <lineage>
        <taxon>Bacteria</taxon>
        <taxon>Pseudomonadati</taxon>
        <taxon>Pseudomonadota</taxon>
        <taxon>Betaproteobacteria</taxon>
        <taxon>Burkholderiales</taxon>
        <taxon>Burkholderiaceae</taxon>
        <taxon>Cupriavidus</taxon>
    </lineage>
</organism>
<sequence length="91" mass="10154">MTRSAKKGPFCDAHLLKKVEVASSGKDKKPIKTWSRRSTILPEFIGLTIAVHNGRQHVPVYVTENMVGHKLGEFAITRTFKGHAADKKAKR</sequence>
<keyword id="KW-1185">Reference proteome</keyword>
<keyword id="KW-0687">Ribonucleoprotein</keyword>
<keyword id="KW-0689">Ribosomal protein</keyword>
<keyword id="KW-0694">RNA-binding</keyword>
<keyword id="KW-0699">rRNA-binding</keyword>
<comment type="function">
    <text evidence="1">Protein S19 forms a complex with S13 that binds strongly to the 16S ribosomal RNA.</text>
</comment>
<comment type="similarity">
    <text evidence="1">Belongs to the universal ribosomal protein uS19 family.</text>
</comment>
<proteinExistence type="inferred from homology"/>
<dbReference type="EMBL" id="AM260479">
    <property type="protein sequence ID" value="CAJ94548.1"/>
    <property type="molecule type" value="Genomic_DNA"/>
</dbReference>
<dbReference type="RefSeq" id="WP_010812394.1">
    <property type="nucleotide sequence ID" value="NZ_CP039287.1"/>
</dbReference>
<dbReference type="SMR" id="Q0K623"/>
<dbReference type="STRING" id="381666.H16_A3480"/>
<dbReference type="GeneID" id="34309636"/>
<dbReference type="KEGG" id="reh:H16_A3480"/>
<dbReference type="eggNOG" id="COG0185">
    <property type="taxonomic scope" value="Bacteria"/>
</dbReference>
<dbReference type="HOGENOM" id="CLU_144911_0_1_4"/>
<dbReference type="OrthoDB" id="9797833at2"/>
<dbReference type="Proteomes" id="UP000008210">
    <property type="component" value="Chromosome 1"/>
</dbReference>
<dbReference type="GO" id="GO:0005737">
    <property type="term" value="C:cytoplasm"/>
    <property type="evidence" value="ECO:0007669"/>
    <property type="project" value="UniProtKB-ARBA"/>
</dbReference>
<dbReference type="GO" id="GO:0015935">
    <property type="term" value="C:small ribosomal subunit"/>
    <property type="evidence" value="ECO:0007669"/>
    <property type="project" value="InterPro"/>
</dbReference>
<dbReference type="GO" id="GO:0019843">
    <property type="term" value="F:rRNA binding"/>
    <property type="evidence" value="ECO:0007669"/>
    <property type="project" value="UniProtKB-UniRule"/>
</dbReference>
<dbReference type="GO" id="GO:0003735">
    <property type="term" value="F:structural constituent of ribosome"/>
    <property type="evidence" value="ECO:0007669"/>
    <property type="project" value="InterPro"/>
</dbReference>
<dbReference type="GO" id="GO:0000028">
    <property type="term" value="P:ribosomal small subunit assembly"/>
    <property type="evidence" value="ECO:0007669"/>
    <property type="project" value="TreeGrafter"/>
</dbReference>
<dbReference type="GO" id="GO:0006412">
    <property type="term" value="P:translation"/>
    <property type="evidence" value="ECO:0007669"/>
    <property type="project" value="UniProtKB-UniRule"/>
</dbReference>
<dbReference type="FunFam" id="3.30.860.10:FF:000001">
    <property type="entry name" value="30S ribosomal protein S19"/>
    <property type="match status" value="1"/>
</dbReference>
<dbReference type="Gene3D" id="3.30.860.10">
    <property type="entry name" value="30s Ribosomal Protein S19, Chain A"/>
    <property type="match status" value="1"/>
</dbReference>
<dbReference type="HAMAP" id="MF_00531">
    <property type="entry name" value="Ribosomal_uS19"/>
    <property type="match status" value="1"/>
</dbReference>
<dbReference type="InterPro" id="IPR002222">
    <property type="entry name" value="Ribosomal_uS19"/>
</dbReference>
<dbReference type="InterPro" id="IPR005732">
    <property type="entry name" value="Ribosomal_uS19_bac-type"/>
</dbReference>
<dbReference type="InterPro" id="IPR020934">
    <property type="entry name" value="Ribosomal_uS19_CS"/>
</dbReference>
<dbReference type="InterPro" id="IPR023575">
    <property type="entry name" value="Ribosomal_uS19_SF"/>
</dbReference>
<dbReference type="NCBIfam" id="TIGR01050">
    <property type="entry name" value="rpsS_bact"/>
    <property type="match status" value="1"/>
</dbReference>
<dbReference type="PANTHER" id="PTHR11880">
    <property type="entry name" value="RIBOSOMAL PROTEIN S19P FAMILY MEMBER"/>
    <property type="match status" value="1"/>
</dbReference>
<dbReference type="PANTHER" id="PTHR11880:SF8">
    <property type="entry name" value="SMALL RIBOSOMAL SUBUNIT PROTEIN US19M"/>
    <property type="match status" value="1"/>
</dbReference>
<dbReference type="Pfam" id="PF00203">
    <property type="entry name" value="Ribosomal_S19"/>
    <property type="match status" value="1"/>
</dbReference>
<dbReference type="PIRSF" id="PIRSF002144">
    <property type="entry name" value="Ribosomal_S19"/>
    <property type="match status" value="1"/>
</dbReference>
<dbReference type="PRINTS" id="PR00975">
    <property type="entry name" value="RIBOSOMALS19"/>
</dbReference>
<dbReference type="SUPFAM" id="SSF54570">
    <property type="entry name" value="Ribosomal protein S19"/>
    <property type="match status" value="1"/>
</dbReference>
<dbReference type="PROSITE" id="PS00323">
    <property type="entry name" value="RIBOSOMAL_S19"/>
    <property type="match status" value="1"/>
</dbReference>
<protein>
    <recommendedName>
        <fullName evidence="1">Small ribosomal subunit protein uS19</fullName>
    </recommendedName>
    <alternativeName>
        <fullName evidence="2">30S ribosomal protein S19</fullName>
    </alternativeName>
</protein>
<gene>
    <name evidence="1" type="primary">rpsS</name>
    <name type="ordered locus">H16_A3480</name>
</gene>
<reference key="1">
    <citation type="journal article" date="2006" name="Nat. Biotechnol.">
        <title>Genome sequence of the bioplastic-producing 'Knallgas' bacterium Ralstonia eutropha H16.</title>
        <authorList>
            <person name="Pohlmann A."/>
            <person name="Fricke W.F."/>
            <person name="Reinecke F."/>
            <person name="Kusian B."/>
            <person name="Liesegang H."/>
            <person name="Cramm R."/>
            <person name="Eitinger T."/>
            <person name="Ewering C."/>
            <person name="Poetter M."/>
            <person name="Schwartz E."/>
            <person name="Strittmatter A."/>
            <person name="Voss I."/>
            <person name="Gottschalk G."/>
            <person name="Steinbuechel A."/>
            <person name="Friedrich B."/>
            <person name="Bowien B."/>
        </authorList>
    </citation>
    <scope>NUCLEOTIDE SEQUENCE [LARGE SCALE GENOMIC DNA]</scope>
    <source>
        <strain>ATCC 17699 / DSM 428 / KCTC 22496 / NCIMB 10442 / H16 / Stanier 337</strain>
    </source>
</reference>
<name>RS19_CUPNH</name>
<evidence type="ECO:0000255" key="1">
    <source>
        <dbReference type="HAMAP-Rule" id="MF_00531"/>
    </source>
</evidence>
<evidence type="ECO:0000305" key="2"/>